<keyword id="KW-0963">Cytoplasm</keyword>
<keyword id="KW-0489">Methyltransferase</keyword>
<keyword id="KW-0949">S-adenosyl-L-methionine</keyword>
<keyword id="KW-0808">Transferase</keyword>
<comment type="function">
    <text evidence="1">Catalyzes the methyl esterification of L-isoaspartyl residues in peptides and proteins that result from spontaneous decomposition of normal L-aspartyl and L-asparaginyl residues. It plays a role in the repair and/or degradation of damaged proteins.</text>
</comment>
<comment type="catalytic activity">
    <reaction evidence="1">
        <text>[protein]-L-isoaspartate + S-adenosyl-L-methionine = [protein]-L-isoaspartate alpha-methyl ester + S-adenosyl-L-homocysteine</text>
        <dbReference type="Rhea" id="RHEA:12705"/>
        <dbReference type="Rhea" id="RHEA-COMP:12143"/>
        <dbReference type="Rhea" id="RHEA-COMP:12144"/>
        <dbReference type="ChEBI" id="CHEBI:57856"/>
        <dbReference type="ChEBI" id="CHEBI:59789"/>
        <dbReference type="ChEBI" id="CHEBI:90596"/>
        <dbReference type="ChEBI" id="CHEBI:90598"/>
        <dbReference type="EC" id="2.1.1.77"/>
    </reaction>
</comment>
<comment type="subcellular location">
    <subcellularLocation>
        <location evidence="1">Cytoplasm</location>
    </subcellularLocation>
</comment>
<comment type="similarity">
    <text evidence="1">Belongs to the methyltransferase superfamily. L-isoaspartyl/D-aspartyl protein methyltransferase family.</text>
</comment>
<reference key="1">
    <citation type="journal article" date="2005" name="J. Bacteriol.">
        <title>Insights into genome plasticity and pathogenicity of the plant pathogenic Bacterium Xanthomonas campestris pv. vesicatoria revealed by the complete genome sequence.</title>
        <authorList>
            <person name="Thieme F."/>
            <person name="Koebnik R."/>
            <person name="Bekel T."/>
            <person name="Berger C."/>
            <person name="Boch J."/>
            <person name="Buettner D."/>
            <person name="Caldana C."/>
            <person name="Gaigalat L."/>
            <person name="Goesmann A."/>
            <person name="Kay S."/>
            <person name="Kirchner O."/>
            <person name="Lanz C."/>
            <person name="Linke B."/>
            <person name="McHardy A.C."/>
            <person name="Meyer F."/>
            <person name="Mittenhuber G."/>
            <person name="Nies D.H."/>
            <person name="Niesbach-Kloesgen U."/>
            <person name="Patschkowski T."/>
            <person name="Rueckert C."/>
            <person name="Rupp O."/>
            <person name="Schneiker S."/>
            <person name="Schuster S.C."/>
            <person name="Vorhoelter F.J."/>
            <person name="Weber E."/>
            <person name="Puehler A."/>
            <person name="Bonas U."/>
            <person name="Bartels D."/>
            <person name="Kaiser O."/>
        </authorList>
    </citation>
    <scope>NUCLEOTIDE SEQUENCE [LARGE SCALE GENOMIC DNA]</scope>
    <source>
        <strain>85-10</strain>
    </source>
</reference>
<gene>
    <name evidence="1" type="primary">pcm</name>
    <name type="ordered locus">XCV1759</name>
</gene>
<name>PIMT_XANE5</name>
<accession>Q3BUS3</accession>
<feature type="chain" id="PRO_0000351955" description="Protein-L-isoaspartate O-methyltransferase">
    <location>
        <begin position="1"/>
        <end position="225"/>
    </location>
</feature>
<feature type="active site" evidence="1">
    <location>
        <position position="75"/>
    </location>
</feature>
<organism>
    <name type="scientific">Xanthomonas euvesicatoria pv. vesicatoria (strain 85-10)</name>
    <name type="common">Xanthomonas campestris pv. vesicatoria</name>
    <dbReference type="NCBI Taxonomy" id="316273"/>
    <lineage>
        <taxon>Bacteria</taxon>
        <taxon>Pseudomonadati</taxon>
        <taxon>Pseudomonadota</taxon>
        <taxon>Gammaproteobacteria</taxon>
        <taxon>Lysobacterales</taxon>
        <taxon>Lysobacteraceae</taxon>
        <taxon>Xanthomonas</taxon>
    </lineage>
</organism>
<dbReference type="EC" id="2.1.1.77" evidence="1"/>
<dbReference type="EMBL" id="AM039952">
    <property type="protein sequence ID" value="CAJ23436.1"/>
    <property type="molecule type" value="Genomic_DNA"/>
</dbReference>
<dbReference type="RefSeq" id="WP_008577326.1">
    <property type="nucleotide sequence ID" value="NZ_CP017190.1"/>
</dbReference>
<dbReference type="SMR" id="Q3BUS3"/>
<dbReference type="STRING" id="456327.BJD11_13750"/>
<dbReference type="KEGG" id="xcv:XCV1759"/>
<dbReference type="eggNOG" id="COG2518">
    <property type="taxonomic scope" value="Bacteria"/>
</dbReference>
<dbReference type="HOGENOM" id="CLU_055432_2_0_6"/>
<dbReference type="Proteomes" id="UP000007069">
    <property type="component" value="Chromosome"/>
</dbReference>
<dbReference type="GO" id="GO:0005737">
    <property type="term" value="C:cytoplasm"/>
    <property type="evidence" value="ECO:0007669"/>
    <property type="project" value="UniProtKB-SubCell"/>
</dbReference>
<dbReference type="GO" id="GO:0004719">
    <property type="term" value="F:protein-L-isoaspartate (D-aspartate) O-methyltransferase activity"/>
    <property type="evidence" value="ECO:0007669"/>
    <property type="project" value="UniProtKB-UniRule"/>
</dbReference>
<dbReference type="GO" id="GO:0032259">
    <property type="term" value="P:methylation"/>
    <property type="evidence" value="ECO:0007669"/>
    <property type="project" value="UniProtKB-KW"/>
</dbReference>
<dbReference type="GO" id="GO:0036211">
    <property type="term" value="P:protein modification process"/>
    <property type="evidence" value="ECO:0007669"/>
    <property type="project" value="UniProtKB-UniRule"/>
</dbReference>
<dbReference type="GO" id="GO:0030091">
    <property type="term" value="P:protein repair"/>
    <property type="evidence" value="ECO:0007669"/>
    <property type="project" value="UniProtKB-UniRule"/>
</dbReference>
<dbReference type="CDD" id="cd02440">
    <property type="entry name" value="AdoMet_MTases"/>
    <property type="match status" value="1"/>
</dbReference>
<dbReference type="FunFam" id="3.40.50.150:FF:000010">
    <property type="entry name" value="Protein-L-isoaspartate O-methyltransferase"/>
    <property type="match status" value="1"/>
</dbReference>
<dbReference type="Gene3D" id="3.40.50.150">
    <property type="entry name" value="Vaccinia Virus protein VP39"/>
    <property type="match status" value="1"/>
</dbReference>
<dbReference type="HAMAP" id="MF_00090">
    <property type="entry name" value="PIMT"/>
    <property type="match status" value="1"/>
</dbReference>
<dbReference type="InterPro" id="IPR000682">
    <property type="entry name" value="PCMT"/>
</dbReference>
<dbReference type="InterPro" id="IPR029063">
    <property type="entry name" value="SAM-dependent_MTases_sf"/>
</dbReference>
<dbReference type="NCBIfam" id="TIGR00080">
    <property type="entry name" value="pimt"/>
    <property type="match status" value="1"/>
</dbReference>
<dbReference type="NCBIfam" id="NF001453">
    <property type="entry name" value="PRK00312.1"/>
    <property type="match status" value="1"/>
</dbReference>
<dbReference type="PANTHER" id="PTHR11579">
    <property type="entry name" value="PROTEIN-L-ISOASPARTATE O-METHYLTRANSFERASE"/>
    <property type="match status" value="1"/>
</dbReference>
<dbReference type="PANTHER" id="PTHR11579:SF0">
    <property type="entry name" value="PROTEIN-L-ISOASPARTATE(D-ASPARTATE) O-METHYLTRANSFERASE"/>
    <property type="match status" value="1"/>
</dbReference>
<dbReference type="Pfam" id="PF01135">
    <property type="entry name" value="PCMT"/>
    <property type="match status" value="1"/>
</dbReference>
<dbReference type="SUPFAM" id="SSF53335">
    <property type="entry name" value="S-adenosyl-L-methionine-dependent methyltransferases"/>
    <property type="match status" value="1"/>
</dbReference>
<dbReference type="PROSITE" id="PS01279">
    <property type="entry name" value="PCMT"/>
    <property type="match status" value="1"/>
</dbReference>
<evidence type="ECO:0000255" key="1">
    <source>
        <dbReference type="HAMAP-Rule" id="MF_00090"/>
    </source>
</evidence>
<sequence length="225" mass="24223">MTPRLRLQPESVGIGMTSQRVRDRLVERLREAGIQDEATLNAMRTVPRHLFIDEALASRAYEDTALPIGHGQTISQPWVVARMTEAVLQVTPAKVLEVGTGSGYQGAILAALGLEVYTVERIGDLLRQARKRFRHLGMNVRSKHDDGRIGWPEHGPYDAIVVTAAAPALVDALVDQLAVGGRLVAPVGGPSSQSLVQLTRGADGAIEQQVLAPVTFVPLLSGMLD</sequence>
<protein>
    <recommendedName>
        <fullName evidence="1">Protein-L-isoaspartate O-methyltransferase</fullName>
        <ecNumber evidence="1">2.1.1.77</ecNumber>
    </recommendedName>
    <alternativeName>
        <fullName evidence="1">L-isoaspartyl protein carboxyl methyltransferase</fullName>
    </alternativeName>
    <alternativeName>
        <fullName evidence="1">Protein L-isoaspartyl methyltransferase</fullName>
    </alternativeName>
    <alternativeName>
        <fullName evidence="1">Protein-beta-aspartate methyltransferase</fullName>
        <shortName evidence="1">PIMT</shortName>
    </alternativeName>
</protein>
<proteinExistence type="inferred from homology"/>